<proteinExistence type="inferred from homology"/>
<evidence type="ECO:0000255" key="1">
    <source>
        <dbReference type="HAMAP-Rule" id="MF_00482"/>
    </source>
</evidence>
<geneLocation type="chloroplast"/>
<comment type="function">
    <text evidence="1">PsaA and PsaB bind P700, the primary electron donor of photosystem I (PSI), as well as the electron acceptors A0, A1 and FX. PSI is a plastocyanin-ferredoxin oxidoreductase, converting photonic excitation into a charge separation, which transfers an electron from the donor P700 chlorophyll pair to the spectroscopically characterized acceptors A0, A1, FX, FA and FB in turn. Oxidized P700 is reduced on the lumenal side of the thylakoid membrane by plastocyanin.</text>
</comment>
<comment type="catalytic activity">
    <reaction evidence="1">
        <text>reduced [plastocyanin] + hnu + oxidized [2Fe-2S]-[ferredoxin] = oxidized [plastocyanin] + reduced [2Fe-2S]-[ferredoxin]</text>
        <dbReference type="Rhea" id="RHEA:30407"/>
        <dbReference type="Rhea" id="RHEA-COMP:10000"/>
        <dbReference type="Rhea" id="RHEA-COMP:10001"/>
        <dbReference type="Rhea" id="RHEA-COMP:10039"/>
        <dbReference type="Rhea" id="RHEA-COMP:10040"/>
        <dbReference type="ChEBI" id="CHEBI:29036"/>
        <dbReference type="ChEBI" id="CHEBI:30212"/>
        <dbReference type="ChEBI" id="CHEBI:33737"/>
        <dbReference type="ChEBI" id="CHEBI:33738"/>
        <dbReference type="ChEBI" id="CHEBI:49552"/>
        <dbReference type="EC" id="1.97.1.12"/>
    </reaction>
</comment>
<comment type="cofactor">
    <text evidence="1">P700 is a chlorophyll a/chlorophyll a' dimer, A0 is one or more chlorophyll a, A1 is one or both phylloquinones and FX is a shared 4Fe-4S iron-sulfur center.</text>
</comment>
<comment type="subunit">
    <text evidence="1">The PsaA/B heterodimer binds the P700 chlorophyll special pair and subsequent electron acceptors. PSI consists of a core antenna complex that captures photons, and an electron transfer chain that converts photonic excitation into a charge separation. The eukaryotic PSI reaction center is composed of at least 11 subunits.</text>
</comment>
<comment type="subcellular location">
    <subcellularLocation>
        <location evidence="1">Plastid</location>
        <location evidence="1">Chloroplast thylakoid membrane</location>
        <topology evidence="1">Multi-pass membrane protein</topology>
    </subcellularLocation>
</comment>
<comment type="similarity">
    <text evidence="1">Belongs to the PsaA/PsaB family.</text>
</comment>
<accession>P41640</accession>
<feature type="chain" id="PRO_0000088633" description="Photosystem I P700 chlorophyll a apoprotein A2">
    <location>
        <begin position="1"/>
        <end position="734"/>
    </location>
</feature>
<feature type="transmembrane region" description="Helical; Name=I" evidence="1">
    <location>
        <begin position="46"/>
        <end position="69"/>
    </location>
</feature>
<feature type="transmembrane region" description="Helical; Name=II" evidence="1">
    <location>
        <begin position="135"/>
        <end position="158"/>
    </location>
</feature>
<feature type="transmembrane region" description="Helical; Name=III" evidence="1">
    <location>
        <begin position="175"/>
        <end position="199"/>
    </location>
</feature>
<feature type="transmembrane region" description="Helical; Name=IV" evidence="1">
    <location>
        <begin position="273"/>
        <end position="291"/>
    </location>
</feature>
<feature type="transmembrane region" description="Helical; Name=V" evidence="1">
    <location>
        <begin position="330"/>
        <end position="353"/>
    </location>
</feature>
<feature type="transmembrane region" description="Helical; Name=VI" evidence="1">
    <location>
        <begin position="369"/>
        <end position="395"/>
    </location>
</feature>
<feature type="transmembrane region" description="Helical; Name=VII" evidence="1">
    <location>
        <begin position="417"/>
        <end position="439"/>
    </location>
</feature>
<feature type="transmembrane region" description="Helical; Name=VIII" evidence="1">
    <location>
        <begin position="517"/>
        <end position="535"/>
    </location>
</feature>
<feature type="transmembrane region" description="Helical; Name=IX" evidence="1">
    <location>
        <begin position="575"/>
        <end position="596"/>
    </location>
</feature>
<feature type="transmembrane region" description="Helical; Name=X" evidence="1">
    <location>
        <begin position="643"/>
        <end position="665"/>
    </location>
</feature>
<feature type="transmembrane region" description="Helical; Name=XI" evidence="1">
    <location>
        <begin position="707"/>
        <end position="727"/>
    </location>
</feature>
<feature type="binding site" evidence="1">
    <location>
        <position position="559"/>
    </location>
    <ligand>
        <name>[4Fe-4S] cluster</name>
        <dbReference type="ChEBI" id="CHEBI:49883"/>
        <note>ligand shared between dimeric partners</note>
    </ligand>
</feature>
<feature type="binding site" evidence="1">
    <location>
        <position position="568"/>
    </location>
    <ligand>
        <name>[4Fe-4S] cluster</name>
        <dbReference type="ChEBI" id="CHEBI:49883"/>
        <note>ligand shared between dimeric partners</note>
    </ligand>
</feature>
<feature type="binding site" description="axial binding residue" evidence="1">
    <location>
        <position position="654"/>
    </location>
    <ligand>
        <name>chlorophyll a</name>
        <dbReference type="ChEBI" id="CHEBI:58416"/>
        <label>B1</label>
    </ligand>
    <ligandPart>
        <name>Mg</name>
        <dbReference type="ChEBI" id="CHEBI:25107"/>
    </ligandPart>
</feature>
<feature type="binding site" description="axial binding residue" evidence="1">
    <location>
        <position position="662"/>
    </location>
    <ligand>
        <name>chlorophyll a</name>
        <dbReference type="ChEBI" id="CHEBI:58416"/>
        <label>B3</label>
    </ligand>
    <ligandPart>
        <name>Mg</name>
        <dbReference type="ChEBI" id="CHEBI:25107"/>
    </ligandPart>
</feature>
<feature type="binding site" evidence="1">
    <location>
        <position position="670"/>
    </location>
    <ligand>
        <name>chlorophyll a</name>
        <dbReference type="ChEBI" id="CHEBI:58416"/>
        <label>B3</label>
    </ligand>
</feature>
<feature type="binding site" evidence="1">
    <location>
        <position position="671"/>
    </location>
    <ligand>
        <name>phylloquinone</name>
        <dbReference type="ChEBI" id="CHEBI:18067"/>
        <label>B</label>
    </ligand>
</feature>
<dbReference type="EC" id="1.97.1.12" evidence="1"/>
<dbReference type="EMBL" id="D17510">
    <property type="protein sequence ID" value="BAA04420.1"/>
    <property type="molecule type" value="Genomic_DNA"/>
</dbReference>
<dbReference type="PIR" id="T07544">
    <property type="entry name" value="T07544"/>
</dbReference>
<dbReference type="RefSeq" id="NP_042465.1">
    <property type="nucleotide sequence ID" value="NC_001631.1"/>
</dbReference>
<dbReference type="SMR" id="P41640"/>
<dbReference type="GeneID" id="809085"/>
<dbReference type="GO" id="GO:0009535">
    <property type="term" value="C:chloroplast thylakoid membrane"/>
    <property type="evidence" value="ECO:0007669"/>
    <property type="project" value="UniProtKB-SubCell"/>
</dbReference>
<dbReference type="GO" id="GO:0009522">
    <property type="term" value="C:photosystem I"/>
    <property type="evidence" value="ECO:0007669"/>
    <property type="project" value="UniProtKB-KW"/>
</dbReference>
<dbReference type="GO" id="GO:0051539">
    <property type="term" value="F:4 iron, 4 sulfur cluster binding"/>
    <property type="evidence" value="ECO:0007669"/>
    <property type="project" value="UniProtKB-KW"/>
</dbReference>
<dbReference type="GO" id="GO:0016168">
    <property type="term" value="F:chlorophyll binding"/>
    <property type="evidence" value="ECO:0007669"/>
    <property type="project" value="UniProtKB-KW"/>
</dbReference>
<dbReference type="GO" id="GO:0009055">
    <property type="term" value="F:electron transfer activity"/>
    <property type="evidence" value="ECO:0007669"/>
    <property type="project" value="UniProtKB-UniRule"/>
</dbReference>
<dbReference type="GO" id="GO:0000287">
    <property type="term" value="F:magnesium ion binding"/>
    <property type="evidence" value="ECO:0007669"/>
    <property type="project" value="UniProtKB-UniRule"/>
</dbReference>
<dbReference type="GO" id="GO:0016491">
    <property type="term" value="F:oxidoreductase activity"/>
    <property type="evidence" value="ECO:0007669"/>
    <property type="project" value="UniProtKB-KW"/>
</dbReference>
<dbReference type="GO" id="GO:0015979">
    <property type="term" value="P:photosynthesis"/>
    <property type="evidence" value="ECO:0007669"/>
    <property type="project" value="UniProtKB-UniRule"/>
</dbReference>
<dbReference type="FunFam" id="1.20.1130.10:FF:000001">
    <property type="entry name" value="Photosystem I P700 chlorophyll a apoprotein A2"/>
    <property type="match status" value="1"/>
</dbReference>
<dbReference type="Gene3D" id="1.20.1130.10">
    <property type="entry name" value="Photosystem I PsaA/PsaB"/>
    <property type="match status" value="1"/>
</dbReference>
<dbReference type="HAMAP" id="MF_00482">
    <property type="entry name" value="PSI_PsaB"/>
    <property type="match status" value="1"/>
</dbReference>
<dbReference type="InterPro" id="IPR001280">
    <property type="entry name" value="PSI_PsaA/B"/>
</dbReference>
<dbReference type="InterPro" id="IPR020586">
    <property type="entry name" value="PSI_PsaA/B_CS"/>
</dbReference>
<dbReference type="InterPro" id="IPR036408">
    <property type="entry name" value="PSI_PsaA/B_sf"/>
</dbReference>
<dbReference type="InterPro" id="IPR006244">
    <property type="entry name" value="PSI_PsaB"/>
</dbReference>
<dbReference type="NCBIfam" id="TIGR01336">
    <property type="entry name" value="psaB"/>
    <property type="match status" value="1"/>
</dbReference>
<dbReference type="PANTHER" id="PTHR30128">
    <property type="entry name" value="OUTER MEMBRANE PROTEIN, OMPA-RELATED"/>
    <property type="match status" value="1"/>
</dbReference>
<dbReference type="PANTHER" id="PTHR30128:SF19">
    <property type="entry name" value="PHOTOSYSTEM I P700 CHLOROPHYLL A APOPROTEIN A1-RELATED"/>
    <property type="match status" value="1"/>
</dbReference>
<dbReference type="Pfam" id="PF00223">
    <property type="entry name" value="PsaA_PsaB"/>
    <property type="match status" value="1"/>
</dbReference>
<dbReference type="PIRSF" id="PIRSF002905">
    <property type="entry name" value="PSI_A"/>
    <property type="match status" value="1"/>
</dbReference>
<dbReference type="PRINTS" id="PR00257">
    <property type="entry name" value="PHOTSYSPSAAB"/>
</dbReference>
<dbReference type="SUPFAM" id="SSF81558">
    <property type="entry name" value="Photosystem I subunits PsaA/PsaB"/>
    <property type="match status" value="1"/>
</dbReference>
<dbReference type="PROSITE" id="PS00419">
    <property type="entry name" value="PHOTOSYSTEM_I_PSAAB"/>
    <property type="match status" value="1"/>
</dbReference>
<protein>
    <recommendedName>
        <fullName evidence="1">Photosystem I P700 chlorophyll a apoprotein A2</fullName>
        <ecNumber evidence="1">1.97.1.12</ecNumber>
    </recommendedName>
    <alternativeName>
        <fullName evidence="1">PSI-B</fullName>
    </alternativeName>
    <alternativeName>
        <fullName evidence="1">PsaB</fullName>
    </alternativeName>
</protein>
<reference key="1">
    <citation type="journal article" date="1994" name="Proc. Natl. Acad. Sci. U.S.A.">
        <title>Loss of all ndh genes as determined by sequencing the entire chloroplast genome of the black pine Pinus thunbergii.</title>
        <authorList>
            <person name="Wakasugi T."/>
            <person name="Tsudzuki J."/>
            <person name="Ito S."/>
            <person name="Nakashima K."/>
            <person name="Tsudzuki T."/>
            <person name="Sugiura M."/>
        </authorList>
    </citation>
    <scope>NUCLEOTIDE SEQUENCE [LARGE SCALE GENOMIC DNA]</scope>
</reference>
<organism>
    <name type="scientific">Pinus thunbergii</name>
    <name type="common">Japanese black pine</name>
    <name type="synonym">Pinus thunbergiana</name>
    <dbReference type="NCBI Taxonomy" id="3350"/>
    <lineage>
        <taxon>Eukaryota</taxon>
        <taxon>Viridiplantae</taxon>
        <taxon>Streptophyta</taxon>
        <taxon>Embryophyta</taxon>
        <taxon>Tracheophyta</taxon>
        <taxon>Spermatophyta</taxon>
        <taxon>Pinopsida</taxon>
        <taxon>Pinidae</taxon>
        <taxon>Conifers I</taxon>
        <taxon>Pinales</taxon>
        <taxon>Pinaceae</taxon>
        <taxon>Pinus</taxon>
        <taxon>Pinus subgen. Pinus</taxon>
    </lineage>
</organism>
<keyword id="KW-0004">4Fe-4S</keyword>
<keyword id="KW-0148">Chlorophyll</keyword>
<keyword id="KW-0150">Chloroplast</keyword>
<keyword id="KW-0157">Chromophore</keyword>
<keyword id="KW-0249">Electron transport</keyword>
<keyword id="KW-0408">Iron</keyword>
<keyword id="KW-0411">Iron-sulfur</keyword>
<keyword id="KW-0460">Magnesium</keyword>
<keyword id="KW-0472">Membrane</keyword>
<keyword id="KW-0479">Metal-binding</keyword>
<keyword id="KW-0560">Oxidoreductase</keyword>
<keyword id="KW-0602">Photosynthesis</keyword>
<keyword id="KW-0603">Photosystem I</keyword>
<keyword id="KW-0934">Plastid</keyword>
<keyword id="KW-0793">Thylakoid</keyword>
<keyword id="KW-0812">Transmembrane</keyword>
<keyword id="KW-1133">Transmembrane helix</keyword>
<keyword id="KW-0813">Transport</keyword>
<name>PSAB_PINTH</name>
<gene>
    <name evidence="1" type="primary">psaB</name>
</gene>
<sequence>MASRFPKFSQGLAQDPTTRRIWFGIATAHHFESHDDITEERLYHKIFASHFGQLAIIFLWTSGNLFHVAWQGNFEAWVRDPLHVRPIAHAIWDPHFGQPAIEAFTRGGAPGPVNIAYSGVYQWWYTIGLRTNEDLYAGALFLLFLSVIFLIAGRLHLQPKWRPSVSWFKNAESRLNHHLSGLFGVSSLAWTGHLVHVAIPESRGVHVRWDNFLDVLPHPEGLEPLFTGQWNLYAQNPDSSSHLFGTSQGAGTAILTFLGGFHPQTQSLWLTDMAHHHLAIALVFSIAGHMYRTNFGIGHSMEDILEAHVPPGGLLGRGHKGLYNTINNSLHFQLGLALASLGVITSLVAQHMYSLPPYAFIAQDFTTQAALYTHHQYIAGFIMTGAFAHGAIFLIRDYNPEQNKDNVLARMLEQKEAIISHLSWVSLLLGFHTLGLYVHNDVMLAFGTPEKQILIEPIFAQWIQSAHGKTLYGFDILLSSTSGPSFDAGKSIWLPGWLNAINDNNNSLFSTIGPGDFLVHHAIALGLHTTTLILVKGALDARGSRLMPDKKDFGYSFPCDGPGRGGTCDISAWDAFYLAVFWMLNTIGWVTFYWHWKHITLWQGNVAQFNESSTYLMGWSRDYLWLNSSQLINGYNPFGMNSLSVWAWMFLFGHLVWATGFMFLISWRGYWQELIETLAWAHERTPLANLVRWRDKPVALSIVQARLVGLAHFSVGYIFTYAAFLIASTSGKFG</sequence>